<name>Y934_PYRNV</name>
<organism>
    <name type="scientific">Pyrobaculum neutrophilum (strain DSM 2338 / JCM 9278 / NBRC 100436 / V24Sta)</name>
    <name type="common">Thermoproteus neutrophilus</name>
    <dbReference type="NCBI Taxonomy" id="444157"/>
    <lineage>
        <taxon>Archaea</taxon>
        <taxon>Thermoproteota</taxon>
        <taxon>Thermoprotei</taxon>
        <taxon>Thermoproteales</taxon>
        <taxon>Thermoproteaceae</taxon>
        <taxon>Pyrobaculum</taxon>
    </lineage>
</organism>
<feature type="chain" id="PRO_1000145505" description="UPF0282 protein Tneu_0934">
    <location>
        <begin position="1"/>
        <end position="305"/>
    </location>
</feature>
<sequence length="305" mass="33914">MDFSPVGEESLGVRSMCFYVETRDVRILFDAGVSLAPRRFGLPPHPRELERARAVRAEILRLAEAADVVTVSHYHRDHFTPWYPSVYMATDGEMYKRVYGGKRVLLKSPQDLNWSQRRRHYGLSKALREAGAEAVYADGGEWAFGGTRVAASPPLWHGPAGSKTGRVLGFAVSDGEERLVFLPDVEGPLEPEPIAFARGARPTVVVVGGPPTYLGWDLEKAVKNLAELVELRPHTLVLAHHLLRDVQWREKVAPLFELAERRGVVVATYASLAGRPEELLEARRRELYAEEPAAVAEAGEGEEED</sequence>
<proteinExistence type="inferred from homology"/>
<reference key="1">
    <citation type="submission" date="2008-03" db="EMBL/GenBank/DDBJ databases">
        <title>Complete sequence of Thermoproteus neutrophilus V24Sta.</title>
        <authorList>
            <consortium name="US DOE Joint Genome Institute"/>
            <person name="Copeland A."/>
            <person name="Lucas S."/>
            <person name="Lapidus A."/>
            <person name="Glavina del Rio T."/>
            <person name="Dalin E."/>
            <person name="Tice H."/>
            <person name="Bruce D."/>
            <person name="Goodwin L."/>
            <person name="Pitluck S."/>
            <person name="Sims D."/>
            <person name="Brettin T."/>
            <person name="Detter J.C."/>
            <person name="Han C."/>
            <person name="Kuske C.R."/>
            <person name="Schmutz J."/>
            <person name="Larimer F."/>
            <person name="Land M."/>
            <person name="Hauser L."/>
            <person name="Kyrpides N."/>
            <person name="Mikhailova N."/>
            <person name="Biddle J.F."/>
            <person name="Zhang Z."/>
            <person name="Fitz-Gibbon S.T."/>
            <person name="Lowe T.M."/>
            <person name="Saltikov C."/>
            <person name="House C.H."/>
            <person name="Richardson P."/>
        </authorList>
    </citation>
    <scope>NUCLEOTIDE SEQUENCE [LARGE SCALE GENOMIC DNA]</scope>
    <source>
        <strain>DSM 2338 / JCM 9278 / NBRC 100436 / V24Sta</strain>
    </source>
</reference>
<comment type="similarity">
    <text evidence="1">Belongs to the UPF0282 family.</text>
</comment>
<dbReference type="EMBL" id="CP001014">
    <property type="protein sequence ID" value="ACB39871.1"/>
    <property type="molecule type" value="Genomic_DNA"/>
</dbReference>
<dbReference type="RefSeq" id="WP_012350291.1">
    <property type="nucleotide sequence ID" value="NC_010525.1"/>
</dbReference>
<dbReference type="STRING" id="444157.Tneu_0934"/>
<dbReference type="GeneID" id="6164355"/>
<dbReference type="KEGG" id="tne:Tneu_0934"/>
<dbReference type="eggNOG" id="arCOG00969">
    <property type="taxonomic scope" value="Archaea"/>
</dbReference>
<dbReference type="HOGENOM" id="CLU_079268_0_0_2"/>
<dbReference type="OrthoDB" id="21331at2157"/>
<dbReference type="Proteomes" id="UP000001694">
    <property type="component" value="Chromosome"/>
</dbReference>
<dbReference type="Gene3D" id="3.60.15.10">
    <property type="entry name" value="Ribonuclease Z/Hydroxyacylglutathione hydrolase-like"/>
    <property type="match status" value="1"/>
</dbReference>
<dbReference type="HAMAP" id="MF_01406">
    <property type="entry name" value="UPF0282"/>
    <property type="match status" value="1"/>
</dbReference>
<dbReference type="InterPro" id="IPR036866">
    <property type="entry name" value="RibonucZ/Hydroxyglut_hydro"/>
</dbReference>
<dbReference type="InterPro" id="IPR050114">
    <property type="entry name" value="UPF0173_UPF0282_UlaG_hydrolase"/>
</dbReference>
<dbReference type="InterPro" id="IPR014426">
    <property type="entry name" value="UPF0282_hydrls"/>
</dbReference>
<dbReference type="PANTHER" id="PTHR43546">
    <property type="entry name" value="UPF0173 METAL-DEPENDENT HYDROLASE MJ1163-RELATED"/>
    <property type="match status" value="1"/>
</dbReference>
<dbReference type="PANTHER" id="PTHR43546:SF4">
    <property type="entry name" value="UPF0282 PROTEIN MJ1629"/>
    <property type="match status" value="1"/>
</dbReference>
<dbReference type="Pfam" id="PF13483">
    <property type="entry name" value="Lactamase_B_3"/>
    <property type="match status" value="1"/>
</dbReference>
<dbReference type="PIRSF" id="PIRSF004944">
    <property type="entry name" value="UCP004944_hydrls"/>
    <property type="match status" value="1"/>
</dbReference>
<dbReference type="SUPFAM" id="SSF56281">
    <property type="entry name" value="Metallo-hydrolase/oxidoreductase"/>
    <property type="match status" value="1"/>
</dbReference>
<accession>B1YDK8</accession>
<gene>
    <name type="ordered locus">Tneu_0934</name>
</gene>
<evidence type="ECO:0000255" key="1">
    <source>
        <dbReference type="HAMAP-Rule" id="MF_01406"/>
    </source>
</evidence>
<protein>
    <recommendedName>
        <fullName evidence="1">UPF0282 protein Tneu_0934</fullName>
    </recommendedName>
</protein>